<dbReference type="EMBL" id="AE005174">
    <property type="protein sequence ID" value="AAG58093.1"/>
    <property type="molecule type" value="Genomic_DNA"/>
</dbReference>
<dbReference type="EMBL" id="BA000007">
    <property type="protein sequence ID" value="BAB37261.1"/>
    <property type="molecule type" value="Genomic_DNA"/>
</dbReference>
<dbReference type="PIR" id="A85954">
    <property type="entry name" value="A85954"/>
</dbReference>
<dbReference type="PIR" id="F91108">
    <property type="entry name" value="F91108"/>
</dbReference>
<dbReference type="RefSeq" id="NP_311865.1">
    <property type="nucleotide sequence ID" value="NC_002695.1"/>
</dbReference>
<dbReference type="RefSeq" id="WP_000091700.1">
    <property type="nucleotide sequence ID" value="NZ_VOAI01000003.1"/>
</dbReference>
<dbReference type="SMR" id="P0A8P4"/>
<dbReference type="STRING" id="155864.Z4307"/>
<dbReference type="GeneID" id="916344"/>
<dbReference type="KEGG" id="ece:Z4307"/>
<dbReference type="KEGG" id="ecs:ECs_3838"/>
<dbReference type="PATRIC" id="fig|386585.9.peg.4006"/>
<dbReference type="eggNOG" id="COG2924">
    <property type="taxonomic scope" value="Bacteria"/>
</dbReference>
<dbReference type="HOGENOM" id="CLU_170994_0_0_6"/>
<dbReference type="OMA" id="NCIKLGR"/>
<dbReference type="Proteomes" id="UP000000558">
    <property type="component" value="Chromosome"/>
</dbReference>
<dbReference type="Proteomes" id="UP000002519">
    <property type="component" value="Chromosome"/>
</dbReference>
<dbReference type="GO" id="GO:0005829">
    <property type="term" value="C:cytosol"/>
    <property type="evidence" value="ECO:0007669"/>
    <property type="project" value="TreeGrafter"/>
</dbReference>
<dbReference type="GO" id="GO:0005506">
    <property type="term" value="F:iron ion binding"/>
    <property type="evidence" value="ECO:0007669"/>
    <property type="project" value="UniProtKB-UniRule"/>
</dbReference>
<dbReference type="GO" id="GO:0034599">
    <property type="term" value="P:cellular response to oxidative stress"/>
    <property type="evidence" value="ECO:0007669"/>
    <property type="project" value="TreeGrafter"/>
</dbReference>
<dbReference type="FunFam" id="1.10.3880.10:FF:000001">
    <property type="entry name" value="Probable Fe(2+)-trafficking protein"/>
    <property type="match status" value="1"/>
</dbReference>
<dbReference type="Gene3D" id="1.10.3880.10">
    <property type="entry name" value="Fe(II) trafficking protein YggX"/>
    <property type="match status" value="1"/>
</dbReference>
<dbReference type="HAMAP" id="MF_00686">
    <property type="entry name" value="Fe_traffic_YggX"/>
    <property type="match status" value="1"/>
</dbReference>
<dbReference type="InterPro" id="IPR007457">
    <property type="entry name" value="Fe_traffick_prot_YggX"/>
</dbReference>
<dbReference type="InterPro" id="IPR036766">
    <property type="entry name" value="Fe_traffick_prot_YggX_sf"/>
</dbReference>
<dbReference type="NCBIfam" id="NF003817">
    <property type="entry name" value="PRK05408.1"/>
    <property type="match status" value="1"/>
</dbReference>
<dbReference type="PANTHER" id="PTHR36965">
    <property type="entry name" value="FE(2+)-TRAFFICKING PROTEIN-RELATED"/>
    <property type="match status" value="1"/>
</dbReference>
<dbReference type="PANTHER" id="PTHR36965:SF1">
    <property type="entry name" value="FE(2+)-TRAFFICKING PROTEIN-RELATED"/>
    <property type="match status" value="1"/>
</dbReference>
<dbReference type="Pfam" id="PF04362">
    <property type="entry name" value="Iron_traffic"/>
    <property type="match status" value="1"/>
</dbReference>
<dbReference type="PIRSF" id="PIRSF029827">
    <property type="entry name" value="Fe_traffic_YggX"/>
    <property type="match status" value="1"/>
</dbReference>
<dbReference type="SUPFAM" id="SSF111148">
    <property type="entry name" value="YggX-like"/>
    <property type="match status" value="1"/>
</dbReference>
<sequence length="91" mass="10953">MSRTIFCTFLQREAEGQDFQLYPGELGKRIYNEISKEAWAQWQHKQTMLINEKKLNMMNAEHRKLLEQEMVNFLFEGKEVHIEGYTPEDKK</sequence>
<proteinExistence type="inferred from homology"/>
<accession>P0A8P4</accession>
<accession>P52065</accession>
<protein>
    <recommendedName>
        <fullName evidence="2">Probable Fe(2+)-trafficking protein</fullName>
    </recommendedName>
</protein>
<evidence type="ECO:0000250" key="1"/>
<evidence type="ECO:0000255" key="2">
    <source>
        <dbReference type="HAMAP-Rule" id="MF_00686"/>
    </source>
</evidence>
<keyword id="KW-0408">Iron</keyword>
<keyword id="KW-1185">Reference proteome</keyword>
<organism>
    <name type="scientific">Escherichia coli O157:H7</name>
    <dbReference type="NCBI Taxonomy" id="83334"/>
    <lineage>
        <taxon>Bacteria</taxon>
        <taxon>Pseudomonadati</taxon>
        <taxon>Pseudomonadota</taxon>
        <taxon>Gammaproteobacteria</taxon>
        <taxon>Enterobacterales</taxon>
        <taxon>Enterobacteriaceae</taxon>
        <taxon>Escherichia</taxon>
    </lineage>
</organism>
<name>FETP_ECO57</name>
<comment type="function">
    <text evidence="2">Could be a mediator in iron transactions between iron acquisition and iron-requiring processes, such as synthesis and/or repair of Fe-S clusters in biosynthetic enzymes.</text>
</comment>
<comment type="subunit">
    <text evidence="2">Monomer.</text>
</comment>
<comment type="similarity">
    <text evidence="2">Belongs to the Fe(2+)-trafficking protein family.</text>
</comment>
<feature type="initiator methionine" description="Removed" evidence="1">
    <location>
        <position position="1"/>
    </location>
</feature>
<feature type="chain" id="PRO_0000214479" description="Probable Fe(2+)-trafficking protein">
    <location>
        <begin position="2"/>
        <end position="91"/>
    </location>
</feature>
<reference key="1">
    <citation type="journal article" date="2001" name="Nature">
        <title>Genome sequence of enterohaemorrhagic Escherichia coli O157:H7.</title>
        <authorList>
            <person name="Perna N.T."/>
            <person name="Plunkett G. III"/>
            <person name="Burland V."/>
            <person name="Mau B."/>
            <person name="Glasner J.D."/>
            <person name="Rose D.J."/>
            <person name="Mayhew G.F."/>
            <person name="Evans P.S."/>
            <person name="Gregor J."/>
            <person name="Kirkpatrick H.A."/>
            <person name="Posfai G."/>
            <person name="Hackett J."/>
            <person name="Klink S."/>
            <person name="Boutin A."/>
            <person name="Shao Y."/>
            <person name="Miller L."/>
            <person name="Grotbeck E.J."/>
            <person name="Davis N.W."/>
            <person name="Lim A."/>
            <person name="Dimalanta E.T."/>
            <person name="Potamousis K."/>
            <person name="Apodaca J."/>
            <person name="Anantharaman T.S."/>
            <person name="Lin J."/>
            <person name="Yen G."/>
            <person name="Schwartz D.C."/>
            <person name="Welch R.A."/>
            <person name="Blattner F.R."/>
        </authorList>
    </citation>
    <scope>NUCLEOTIDE SEQUENCE [LARGE SCALE GENOMIC DNA]</scope>
    <source>
        <strain>O157:H7 / EDL933 / ATCC 700927 / EHEC</strain>
    </source>
</reference>
<reference key="2">
    <citation type="journal article" date="2001" name="DNA Res.">
        <title>Complete genome sequence of enterohemorrhagic Escherichia coli O157:H7 and genomic comparison with a laboratory strain K-12.</title>
        <authorList>
            <person name="Hayashi T."/>
            <person name="Makino K."/>
            <person name="Ohnishi M."/>
            <person name="Kurokawa K."/>
            <person name="Ishii K."/>
            <person name="Yokoyama K."/>
            <person name="Han C.-G."/>
            <person name="Ohtsubo E."/>
            <person name="Nakayama K."/>
            <person name="Murata T."/>
            <person name="Tanaka M."/>
            <person name="Tobe T."/>
            <person name="Iida T."/>
            <person name="Takami H."/>
            <person name="Honda T."/>
            <person name="Sasakawa C."/>
            <person name="Ogasawara N."/>
            <person name="Yasunaga T."/>
            <person name="Kuhara S."/>
            <person name="Shiba T."/>
            <person name="Hattori M."/>
            <person name="Shinagawa H."/>
        </authorList>
    </citation>
    <scope>NUCLEOTIDE SEQUENCE [LARGE SCALE GENOMIC DNA]</scope>
    <source>
        <strain>O157:H7 / Sakai / RIMD 0509952 / EHEC</strain>
    </source>
</reference>
<gene>
    <name evidence="2" type="primary">yggX</name>
    <name type="ordered locus">Z4307</name>
    <name type="ordered locus">ECs3838</name>
</gene>